<accession>Q8S7M7</accession>
<accession>A0A0P0XXT2</accession>
<accession>Q0IVG6</accession>
<evidence type="ECO:0000250" key="1"/>
<evidence type="ECO:0000269" key="2">
    <source>
    </source>
</evidence>
<evidence type="ECO:0000305" key="3"/>
<name>PIRL5_ORYSJ</name>
<feature type="chain" id="PRO_0000423614" description="Plant intracellular Ras-group-related LRR protein 5">
    <location>
        <begin position="1"/>
        <end position="543"/>
    </location>
</feature>
<feature type="repeat" description="LRR 1">
    <location>
        <begin position="239"/>
        <end position="262"/>
    </location>
</feature>
<feature type="repeat" description="LRR 2">
    <location>
        <begin position="264"/>
        <end position="284"/>
    </location>
</feature>
<feature type="repeat" description="LRR 3">
    <location>
        <begin position="285"/>
        <end position="307"/>
    </location>
</feature>
<feature type="repeat" description="LRR 4">
    <location>
        <begin position="309"/>
        <end position="331"/>
    </location>
</feature>
<feature type="repeat" description="LRR 5">
    <location>
        <begin position="332"/>
        <end position="354"/>
    </location>
</feature>
<feature type="repeat" description="LRR 6">
    <location>
        <begin position="356"/>
        <end position="377"/>
    </location>
</feature>
<feature type="repeat" description="LRR 7">
    <location>
        <begin position="378"/>
        <end position="400"/>
    </location>
</feature>
<feature type="repeat" description="LRR 8">
    <location>
        <begin position="402"/>
        <end position="424"/>
    </location>
</feature>
<feature type="repeat" description="LRR 9">
    <location>
        <begin position="426"/>
        <end position="448"/>
    </location>
</feature>
<feature type="repeat" description="LRR 10">
    <location>
        <begin position="449"/>
        <end position="470"/>
    </location>
</feature>
<feature type="repeat" description="LRR 11; degenerate">
    <location>
        <begin position="472"/>
        <end position="494"/>
    </location>
</feature>
<feature type="short sequence motif" description="GVYW; degenerate">
    <location>
        <begin position="495"/>
        <end position="502"/>
    </location>
</feature>
<gene>
    <name type="primary">IRL5</name>
    <name type="ordered locus">Os10g0572300</name>
    <name type="ordered locus">LOC_Os10g42190</name>
    <name type="ORF">OsJ_32547</name>
    <name type="ORF">OSJNBa0095C07.8</name>
</gene>
<organism>
    <name type="scientific">Oryza sativa subsp. japonica</name>
    <name type="common">Rice</name>
    <dbReference type="NCBI Taxonomy" id="39947"/>
    <lineage>
        <taxon>Eukaryota</taxon>
        <taxon>Viridiplantae</taxon>
        <taxon>Streptophyta</taxon>
        <taxon>Embryophyta</taxon>
        <taxon>Tracheophyta</taxon>
        <taxon>Spermatophyta</taxon>
        <taxon>Magnoliopsida</taxon>
        <taxon>Liliopsida</taxon>
        <taxon>Poales</taxon>
        <taxon>Poaceae</taxon>
        <taxon>BOP clade</taxon>
        <taxon>Oryzoideae</taxon>
        <taxon>Oryzeae</taxon>
        <taxon>Oryzinae</taxon>
        <taxon>Oryza</taxon>
        <taxon>Oryza sativa</taxon>
    </lineage>
</organism>
<comment type="function">
    <text evidence="1">Leucine-rich repeat protein that likely mediates protein interactions, possibly in the context of signal transduction.</text>
</comment>
<comment type="tissue specificity">
    <text evidence="2">Widely expressed.</text>
</comment>
<comment type="induction">
    <text evidence="2">By light.</text>
</comment>
<comment type="similarity">
    <text evidence="3">Belongs to the SHOC2 family.</text>
</comment>
<comment type="sequence caution" evidence="3">
    <conflict type="erroneous initiation">
        <sequence resource="EMBL-CDS" id="BAF27299"/>
    </conflict>
    <text>Truncated N-terminus.</text>
</comment>
<reference key="1">
    <citation type="journal article" date="2003" name="Science">
        <title>In-depth view of structure, activity, and evolution of rice chromosome 10.</title>
        <authorList>
            <person name="Yu Y."/>
            <person name="Rambo T."/>
            <person name="Currie J."/>
            <person name="Saski C."/>
            <person name="Kim H.-R."/>
            <person name="Collura K."/>
            <person name="Thompson S."/>
            <person name="Simmons J."/>
            <person name="Yang T.-J."/>
            <person name="Nah G."/>
            <person name="Patel A.J."/>
            <person name="Thurmond S."/>
            <person name="Henry D."/>
            <person name="Oates R."/>
            <person name="Palmer M."/>
            <person name="Pries G."/>
            <person name="Gibson J."/>
            <person name="Anderson H."/>
            <person name="Paradkar M."/>
            <person name="Crane L."/>
            <person name="Dale J."/>
            <person name="Carver M.B."/>
            <person name="Wood T."/>
            <person name="Frisch D."/>
            <person name="Engler F."/>
            <person name="Soderlund C."/>
            <person name="Palmer L.E."/>
            <person name="Teytelman L."/>
            <person name="Nascimento L."/>
            <person name="De la Bastide M."/>
            <person name="Spiegel L."/>
            <person name="Ware D."/>
            <person name="O'Shaughnessy A."/>
            <person name="Dike S."/>
            <person name="Dedhia N."/>
            <person name="Preston R."/>
            <person name="Huang E."/>
            <person name="Ferraro K."/>
            <person name="Kuit K."/>
            <person name="Miller B."/>
            <person name="Zutavern T."/>
            <person name="Katzenberger F."/>
            <person name="Muller S."/>
            <person name="Balija V."/>
            <person name="Martienssen R.A."/>
            <person name="Stein L."/>
            <person name="Minx P."/>
            <person name="Johnson D."/>
            <person name="Cordum H."/>
            <person name="Mardis E."/>
            <person name="Cheng Z."/>
            <person name="Jiang J."/>
            <person name="Wilson R."/>
            <person name="McCombie W.R."/>
            <person name="Wing R.A."/>
            <person name="Yuan Q."/>
            <person name="Ouyang S."/>
            <person name="Liu J."/>
            <person name="Jones K.M."/>
            <person name="Gansberger K."/>
            <person name="Moffat K."/>
            <person name="Hill J."/>
            <person name="Tsitrin T."/>
            <person name="Overton L."/>
            <person name="Bera J."/>
            <person name="Kim M."/>
            <person name="Jin S."/>
            <person name="Tallon L."/>
            <person name="Ciecko A."/>
            <person name="Pai G."/>
            <person name="Van Aken S."/>
            <person name="Utterback T."/>
            <person name="Reidmuller S."/>
            <person name="Bormann J."/>
            <person name="Feldblyum T."/>
            <person name="Hsiao J."/>
            <person name="Zismann V."/>
            <person name="Blunt S."/>
            <person name="de Vazeille A.R."/>
            <person name="Shaffer T."/>
            <person name="Koo H."/>
            <person name="Suh B."/>
            <person name="Yang Q."/>
            <person name="Haas B."/>
            <person name="Peterson J."/>
            <person name="Pertea M."/>
            <person name="Volfovsky N."/>
            <person name="Wortman J."/>
            <person name="White O."/>
            <person name="Salzberg S.L."/>
            <person name="Fraser C.M."/>
            <person name="Buell C.R."/>
            <person name="Messing J."/>
            <person name="Song R."/>
            <person name="Fuks G."/>
            <person name="Llaca V."/>
            <person name="Kovchak S."/>
            <person name="Young S."/>
            <person name="Bowers J.E."/>
            <person name="Paterson A.H."/>
            <person name="Johns M.A."/>
            <person name="Mao L."/>
            <person name="Pan H."/>
            <person name="Dean R.A."/>
        </authorList>
    </citation>
    <scope>NUCLEOTIDE SEQUENCE [LARGE SCALE GENOMIC DNA]</scope>
    <source>
        <strain>cv. Nipponbare</strain>
    </source>
</reference>
<reference key="2">
    <citation type="journal article" date="2005" name="Nature">
        <title>The map-based sequence of the rice genome.</title>
        <authorList>
            <consortium name="International rice genome sequencing project (IRGSP)"/>
        </authorList>
    </citation>
    <scope>NUCLEOTIDE SEQUENCE [LARGE SCALE GENOMIC DNA]</scope>
    <source>
        <strain>cv. Nipponbare</strain>
    </source>
</reference>
<reference key="3">
    <citation type="journal article" date="2008" name="Nucleic Acids Res.">
        <title>The rice annotation project database (RAP-DB): 2008 update.</title>
        <authorList>
            <consortium name="The rice annotation project (RAP)"/>
        </authorList>
    </citation>
    <scope>GENOME REANNOTATION</scope>
    <source>
        <strain>cv. Nipponbare</strain>
    </source>
</reference>
<reference key="4">
    <citation type="journal article" date="2013" name="Rice">
        <title>Improvement of the Oryza sativa Nipponbare reference genome using next generation sequence and optical map data.</title>
        <authorList>
            <person name="Kawahara Y."/>
            <person name="de la Bastide M."/>
            <person name="Hamilton J.P."/>
            <person name="Kanamori H."/>
            <person name="McCombie W.R."/>
            <person name="Ouyang S."/>
            <person name="Schwartz D.C."/>
            <person name="Tanaka T."/>
            <person name="Wu J."/>
            <person name="Zhou S."/>
            <person name="Childs K.L."/>
            <person name="Davidson R.M."/>
            <person name="Lin H."/>
            <person name="Quesada-Ocampo L."/>
            <person name="Vaillancourt B."/>
            <person name="Sakai H."/>
            <person name="Lee S.S."/>
            <person name="Kim J."/>
            <person name="Numa H."/>
            <person name="Itoh T."/>
            <person name="Buell C.R."/>
            <person name="Matsumoto T."/>
        </authorList>
    </citation>
    <scope>GENOME REANNOTATION</scope>
    <source>
        <strain>cv. Nipponbare</strain>
    </source>
</reference>
<reference key="5">
    <citation type="journal article" date="2005" name="PLoS Biol.">
        <title>The genomes of Oryza sativa: a history of duplications.</title>
        <authorList>
            <person name="Yu J."/>
            <person name="Wang J."/>
            <person name="Lin W."/>
            <person name="Li S."/>
            <person name="Li H."/>
            <person name="Zhou J."/>
            <person name="Ni P."/>
            <person name="Dong W."/>
            <person name="Hu S."/>
            <person name="Zeng C."/>
            <person name="Zhang J."/>
            <person name="Zhang Y."/>
            <person name="Li R."/>
            <person name="Xu Z."/>
            <person name="Li S."/>
            <person name="Li X."/>
            <person name="Zheng H."/>
            <person name="Cong L."/>
            <person name="Lin L."/>
            <person name="Yin J."/>
            <person name="Geng J."/>
            <person name="Li G."/>
            <person name="Shi J."/>
            <person name="Liu J."/>
            <person name="Lv H."/>
            <person name="Li J."/>
            <person name="Wang J."/>
            <person name="Deng Y."/>
            <person name="Ran L."/>
            <person name="Shi X."/>
            <person name="Wang X."/>
            <person name="Wu Q."/>
            <person name="Li C."/>
            <person name="Ren X."/>
            <person name="Wang J."/>
            <person name="Wang X."/>
            <person name="Li D."/>
            <person name="Liu D."/>
            <person name="Zhang X."/>
            <person name="Ji Z."/>
            <person name="Zhao W."/>
            <person name="Sun Y."/>
            <person name="Zhang Z."/>
            <person name="Bao J."/>
            <person name="Han Y."/>
            <person name="Dong L."/>
            <person name="Ji J."/>
            <person name="Chen P."/>
            <person name="Wu S."/>
            <person name="Liu J."/>
            <person name="Xiao Y."/>
            <person name="Bu D."/>
            <person name="Tan J."/>
            <person name="Yang L."/>
            <person name="Ye C."/>
            <person name="Zhang J."/>
            <person name="Xu J."/>
            <person name="Zhou Y."/>
            <person name="Yu Y."/>
            <person name="Zhang B."/>
            <person name="Zhuang S."/>
            <person name="Wei H."/>
            <person name="Liu B."/>
            <person name="Lei M."/>
            <person name="Yu H."/>
            <person name="Li Y."/>
            <person name="Xu H."/>
            <person name="Wei S."/>
            <person name="He X."/>
            <person name="Fang L."/>
            <person name="Zhang Z."/>
            <person name="Zhang Y."/>
            <person name="Huang X."/>
            <person name="Su Z."/>
            <person name="Tong W."/>
            <person name="Li J."/>
            <person name="Tong Z."/>
            <person name="Li S."/>
            <person name="Ye J."/>
            <person name="Wang L."/>
            <person name="Fang L."/>
            <person name="Lei T."/>
            <person name="Chen C.-S."/>
            <person name="Chen H.-C."/>
            <person name="Xu Z."/>
            <person name="Li H."/>
            <person name="Huang H."/>
            <person name="Zhang F."/>
            <person name="Xu H."/>
            <person name="Li N."/>
            <person name="Zhao C."/>
            <person name="Li S."/>
            <person name="Dong L."/>
            <person name="Huang Y."/>
            <person name="Li L."/>
            <person name="Xi Y."/>
            <person name="Qi Q."/>
            <person name="Li W."/>
            <person name="Zhang B."/>
            <person name="Hu W."/>
            <person name="Zhang Y."/>
            <person name="Tian X."/>
            <person name="Jiao Y."/>
            <person name="Liang X."/>
            <person name="Jin J."/>
            <person name="Gao L."/>
            <person name="Zheng W."/>
            <person name="Hao B."/>
            <person name="Liu S.-M."/>
            <person name="Wang W."/>
            <person name="Yuan L."/>
            <person name="Cao M."/>
            <person name="McDermott J."/>
            <person name="Samudrala R."/>
            <person name="Wang J."/>
            <person name="Wong G.K.-S."/>
            <person name="Yang H."/>
        </authorList>
    </citation>
    <scope>NUCLEOTIDE SEQUENCE [LARGE SCALE GENOMIC DNA]</scope>
    <source>
        <strain>cv. Nipponbare</strain>
    </source>
</reference>
<reference key="6">
    <citation type="journal article" date="2003" name="Science">
        <title>Collection, mapping, and annotation of over 28,000 cDNA clones from japonica rice.</title>
        <authorList>
            <consortium name="The rice full-length cDNA consortium"/>
        </authorList>
    </citation>
    <scope>NUCLEOTIDE SEQUENCE [LARGE SCALE MRNA]</scope>
    <source>
        <strain>cv. Nipponbare</strain>
    </source>
</reference>
<reference key="7">
    <citation type="journal article" date="2010" name="Plant Mol. Biol.">
        <title>Molecular characterization, expression pattern, and functional analysis of the OsIRL gene family encoding intracellular Ras-group-related LRR proteins in rice.</title>
        <authorList>
            <person name="You C."/>
            <person name="Dai X."/>
            <person name="Li X."/>
            <person name="Wang L."/>
            <person name="Chen G."/>
            <person name="Xiao J."/>
            <person name="Wu C."/>
        </authorList>
    </citation>
    <scope>GENE FAMILY</scope>
    <scope>MOTIF GVYW</scope>
    <scope>TISSUE SPECIFICITY</scope>
    <scope>INDUCTION BY LIGHT</scope>
</reference>
<proteinExistence type="evidence at transcript level"/>
<sequence>MASAAEAVEELTRLYRELPPRPAVEEVEAAEAVLASADAEEAARLDEVAREEASASASSSAAAPGRADGELLAVLREARRNAVRLRALQQRKEAAYVVELERRFKVFDDLIQRASRVVSSSSDAAEAGGGTTGDGYVGVGADSVDLEMELRKKEAAVAAAAAVAEMERGSKGLAALGLESKPISSLRRDVSAGTDMEKLSLIQVASLIESSAKKGITELSLRGKLVDQIEWLPVSLGKLQDVTELDLSENRIMALPSTIGSLRYLTKLDLHSNQLINLPDAFGELSNLIDLDLHANQLKSLPSSFGNLTSLANLDLSSNMLKALPDCLGKLANLRRLIVETNELEELPYTIGSCTSLVELRLDFNQLKALPEAIGKLEKLEILTLHYNRIKGLPTTVGSLSRLRELDVSFNEVEVIPENICFATSLVKLNLSRNFADLRALPKSIGNLEMLEELDISSNQIRVLPDSFRCLSRLRVFHADETPLEFPPREVVKLGAQAVVKYMNDLNAARGTNQKKTDRGSFWTWLFSLFGCCKKNQEVGLPV</sequence>
<keyword id="KW-0433">Leucine-rich repeat</keyword>
<keyword id="KW-1185">Reference proteome</keyword>
<keyword id="KW-0677">Repeat</keyword>
<dbReference type="EMBL" id="AC077693">
    <property type="protein sequence ID" value="AAL86486.1"/>
    <property type="molecule type" value="Genomic_DNA"/>
</dbReference>
<dbReference type="EMBL" id="DP000086">
    <property type="protein sequence ID" value="AAP55113.1"/>
    <property type="molecule type" value="Genomic_DNA"/>
</dbReference>
<dbReference type="EMBL" id="DP000086">
    <property type="protein sequence ID" value="ABB48010.1"/>
    <property type="molecule type" value="Genomic_DNA"/>
</dbReference>
<dbReference type="EMBL" id="AP008216">
    <property type="protein sequence ID" value="BAF27299.2"/>
    <property type="status" value="ALT_INIT"/>
    <property type="molecule type" value="Genomic_DNA"/>
</dbReference>
<dbReference type="EMBL" id="AP014966">
    <property type="protein sequence ID" value="BAT12165.1"/>
    <property type="molecule type" value="Genomic_DNA"/>
</dbReference>
<dbReference type="EMBL" id="CM000147">
    <property type="protein sequence ID" value="EAZ17053.1"/>
    <property type="molecule type" value="Genomic_DNA"/>
</dbReference>
<dbReference type="EMBL" id="AK102709">
    <property type="protein sequence ID" value="BAG95685.1"/>
    <property type="molecule type" value="mRNA"/>
</dbReference>
<dbReference type="RefSeq" id="XP_015614719.1">
    <property type="nucleotide sequence ID" value="XM_015759233.1"/>
</dbReference>
<dbReference type="SMR" id="Q8S7M7"/>
<dbReference type="STRING" id="39947.Q8S7M7"/>
<dbReference type="PaxDb" id="39947-Q8S7M7"/>
<dbReference type="EnsemblPlants" id="Os10t0572300-01">
    <property type="protein sequence ID" value="Os10t0572300-01"/>
    <property type="gene ID" value="Os10g0572300"/>
</dbReference>
<dbReference type="Gramene" id="Os10t0572300-01">
    <property type="protein sequence ID" value="Os10t0572300-01"/>
    <property type="gene ID" value="Os10g0572300"/>
</dbReference>
<dbReference type="KEGG" id="dosa:Os10g0572300"/>
<dbReference type="eggNOG" id="KOG0619">
    <property type="taxonomic scope" value="Eukaryota"/>
</dbReference>
<dbReference type="InParanoid" id="Q8S7M7"/>
<dbReference type="OMA" id="FRSHEQR"/>
<dbReference type="OrthoDB" id="1668230at2759"/>
<dbReference type="Proteomes" id="UP000000763">
    <property type="component" value="Chromosome 10"/>
</dbReference>
<dbReference type="Proteomes" id="UP000007752">
    <property type="component" value="Chromosome 10"/>
</dbReference>
<dbReference type="Proteomes" id="UP000059680">
    <property type="component" value="Chromosome 10"/>
</dbReference>
<dbReference type="ExpressionAtlas" id="Q8S7M7">
    <property type="expression patterns" value="baseline and differential"/>
</dbReference>
<dbReference type="GO" id="GO:0035556">
    <property type="term" value="P:intracellular signal transduction"/>
    <property type="evidence" value="ECO:0000318"/>
    <property type="project" value="GO_Central"/>
</dbReference>
<dbReference type="GO" id="GO:0009416">
    <property type="term" value="P:response to light stimulus"/>
    <property type="evidence" value="ECO:0000270"/>
    <property type="project" value="UniProtKB"/>
</dbReference>
<dbReference type="FunFam" id="3.80.10.10:FF:000405">
    <property type="entry name" value="Plant intracellular Ras-group-related LRR protein 4"/>
    <property type="match status" value="1"/>
</dbReference>
<dbReference type="Gene3D" id="3.80.10.10">
    <property type="entry name" value="Ribonuclease Inhibitor"/>
    <property type="match status" value="1"/>
</dbReference>
<dbReference type="InterPro" id="IPR001611">
    <property type="entry name" value="Leu-rich_rpt"/>
</dbReference>
<dbReference type="InterPro" id="IPR003591">
    <property type="entry name" value="Leu-rich_rpt_typical-subtyp"/>
</dbReference>
<dbReference type="InterPro" id="IPR032675">
    <property type="entry name" value="LRR_dom_sf"/>
</dbReference>
<dbReference type="InterPro" id="IPR050216">
    <property type="entry name" value="LRR_domain-containing"/>
</dbReference>
<dbReference type="PANTHER" id="PTHR48051">
    <property type="match status" value="1"/>
</dbReference>
<dbReference type="PANTHER" id="PTHR48051:SF54">
    <property type="entry name" value="LEUCINE-RICH REPEAT-CONTAINING PROTEIN"/>
    <property type="match status" value="1"/>
</dbReference>
<dbReference type="Pfam" id="PF13855">
    <property type="entry name" value="LRR_8"/>
    <property type="match status" value="3"/>
</dbReference>
<dbReference type="SMART" id="SM00364">
    <property type="entry name" value="LRR_BAC"/>
    <property type="match status" value="9"/>
</dbReference>
<dbReference type="SMART" id="SM00369">
    <property type="entry name" value="LRR_TYP"/>
    <property type="match status" value="9"/>
</dbReference>
<dbReference type="SUPFAM" id="SSF52058">
    <property type="entry name" value="L domain-like"/>
    <property type="match status" value="1"/>
</dbReference>
<dbReference type="PROSITE" id="PS51450">
    <property type="entry name" value="LRR"/>
    <property type="match status" value="10"/>
</dbReference>
<protein>
    <recommendedName>
        <fullName>Plant intracellular Ras-group-related LRR protein 5</fullName>
    </recommendedName>
    <alternativeName>
        <fullName>Intracellular Ras-group-related LRR protein 5</fullName>
        <shortName>OsIRL5</shortName>
    </alternativeName>
</protein>